<protein>
    <recommendedName>
        <fullName evidence="1">Biotin synthase</fullName>
        <ecNumber evidence="1">2.8.1.6</ecNumber>
    </recommendedName>
</protein>
<gene>
    <name evidence="1" type="primary">bioB</name>
    <name type="ordered locus">Reut_A0150</name>
</gene>
<name>BIOB_CUPPJ</name>
<feature type="chain" id="PRO_0000381573" description="Biotin synthase">
    <location>
        <begin position="1"/>
        <end position="342"/>
    </location>
</feature>
<feature type="domain" description="Radical SAM core" evidence="2">
    <location>
        <begin position="63"/>
        <end position="290"/>
    </location>
</feature>
<feature type="binding site" evidence="1">
    <location>
        <position position="78"/>
    </location>
    <ligand>
        <name>[4Fe-4S] cluster</name>
        <dbReference type="ChEBI" id="CHEBI:49883"/>
        <note>4Fe-4S-S-AdoMet</note>
    </ligand>
</feature>
<feature type="binding site" evidence="1">
    <location>
        <position position="82"/>
    </location>
    <ligand>
        <name>[4Fe-4S] cluster</name>
        <dbReference type="ChEBI" id="CHEBI:49883"/>
        <note>4Fe-4S-S-AdoMet</note>
    </ligand>
</feature>
<feature type="binding site" evidence="1">
    <location>
        <position position="85"/>
    </location>
    <ligand>
        <name>[4Fe-4S] cluster</name>
        <dbReference type="ChEBI" id="CHEBI:49883"/>
        <note>4Fe-4S-S-AdoMet</note>
    </ligand>
</feature>
<feature type="binding site" evidence="1">
    <location>
        <position position="122"/>
    </location>
    <ligand>
        <name>[2Fe-2S] cluster</name>
        <dbReference type="ChEBI" id="CHEBI:190135"/>
    </ligand>
</feature>
<feature type="binding site" evidence="1">
    <location>
        <position position="153"/>
    </location>
    <ligand>
        <name>[2Fe-2S] cluster</name>
        <dbReference type="ChEBI" id="CHEBI:190135"/>
    </ligand>
</feature>
<feature type="binding site" evidence="1">
    <location>
        <position position="213"/>
    </location>
    <ligand>
        <name>[2Fe-2S] cluster</name>
        <dbReference type="ChEBI" id="CHEBI:190135"/>
    </ligand>
</feature>
<feature type="binding site" evidence="1">
    <location>
        <position position="285"/>
    </location>
    <ligand>
        <name>[2Fe-2S] cluster</name>
        <dbReference type="ChEBI" id="CHEBI:190135"/>
    </ligand>
</feature>
<proteinExistence type="inferred from homology"/>
<organism>
    <name type="scientific">Cupriavidus pinatubonensis (strain JMP 134 / LMG 1197)</name>
    <name type="common">Cupriavidus necator (strain JMP 134)</name>
    <dbReference type="NCBI Taxonomy" id="264198"/>
    <lineage>
        <taxon>Bacteria</taxon>
        <taxon>Pseudomonadati</taxon>
        <taxon>Pseudomonadota</taxon>
        <taxon>Betaproteobacteria</taxon>
        <taxon>Burkholderiales</taxon>
        <taxon>Burkholderiaceae</taxon>
        <taxon>Cupriavidus</taxon>
    </lineage>
</organism>
<reference key="1">
    <citation type="journal article" date="2010" name="PLoS ONE">
        <title>The complete multipartite genome sequence of Cupriavidus necator JMP134, a versatile pollutant degrader.</title>
        <authorList>
            <person name="Lykidis A."/>
            <person name="Perez-Pantoja D."/>
            <person name="Ledger T."/>
            <person name="Mavromatis K."/>
            <person name="Anderson I.J."/>
            <person name="Ivanova N.N."/>
            <person name="Hooper S.D."/>
            <person name="Lapidus A."/>
            <person name="Lucas S."/>
            <person name="Gonzalez B."/>
            <person name="Kyrpides N.C."/>
        </authorList>
    </citation>
    <scope>NUCLEOTIDE SEQUENCE [LARGE SCALE GENOMIC DNA]</scope>
    <source>
        <strain>JMP134 / LMG 1197</strain>
    </source>
</reference>
<keyword id="KW-0001">2Fe-2S</keyword>
<keyword id="KW-0004">4Fe-4S</keyword>
<keyword id="KW-0093">Biotin biosynthesis</keyword>
<keyword id="KW-0408">Iron</keyword>
<keyword id="KW-0411">Iron-sulfur</keyword>
<keyword id="KW-0479">Metal-binding</keyword>
<keyword id="KW-0949">S-adenosyl-L-methionine</keyword>
<keyword id="KW-0808">Transferase</keyword>
<dbReference type="EC" id="2.8.1.6" evidence="1"/>
<dbReference type="EMBL" id="CP000090">
    <property type="protein sequence ID" value="AAZ59532.1"/>
    <property type="molecule type" value="Genomic_DNA"/>
</dbReference>
<dbReference type="SMR" id="Q477A1"/>
<dbReference type="STRING" id="264198.Reut_A0150"/>
<dbReference type="KEGG" id="reu:Reut_A0150"/>
<dbReference type="eggNOG" id="COG0502">
    <property type="taxonomic scope" value="Bacteria"/>
</dbReference>
<dbReference type="HOGENOM" id="CLU_033172_1_2_4"/>
<dbReference type="OrthoDB" id="9786826at2"/>
<dbReference type="UniPathway" id="UPA00078">
    <property type="reaction ID" value="UER00162"/>
</dbReference>
<dbReference type="GO" id="GO:0051537">
    <property type="term" value="F:2 iron, 2 sulfur cluster binding"/>
    <property type="evidence" value="ECO:0007669"/>
    <property type="project" value="UniProtKB-KW"/>
</dbReference>
<dbReference type="GO" id="GO:0051539">
    <property type="term" value="F:4 iron, 4 sulfur cluster binding"/>
    <property type="evidence" value="ECO:0007669"/>
    <property type="project" value="UniProtKB-KW"/>
</dbReference>
<dbReference type="GO" id="GO:0004076">
    <property type="term" value="F:biotin synthase activity"/>
    <property type="evidence" value="ECO:0007669"/>
    <property type="project" value="UniProtKB-UniRule"/>
</dbReference>
<dbReference type="GO" id="GO:0005506">
    <property type="term" value="F:iron ion binding"/>
    <property type="evidence" value="ECO:0007669"/>
    <property type="project" value="UniProtKB-UniRule"/>
</dbReference>
<dbReference type="GO" id="GO:0009102">
    <property type="term" value="P:biotin biosynthetic process"/>
    <property type="evidence" value="ECO:0007669"/>
    <property type="project" value="UniProtKB-UniRule"/>
</dbReference>
<dbReference type="CDD" id="cd01335">
    <property type="entry name" value="Radical_SAM"/>
    <property type="match status" value="1"/>
</dbReference>
<dbReference type="FunFam" id="3.20.20.70:FF:000011">
    <property type="entry name" value="Biotin synthase"/>
    <property type="match status" value="1"/>
</dbReference>
<dbReference type="Gene3D" id="3.20.20.70">
    <property type="entry name" value="Aldolase class I"/>
    <property type="match status" value="1"/>
</dbReference>
<dbReference type="HAMAP" id="MF_01694">
    <property type="entry name" value="BioB"/>
    <property type="match status" value="1"/>
</dbReference>
<dbReference type="InterPro" id="IPR013785">
    <property type="entry name" value="Aldolase_TIM"/>
</dbReference>
<dbReference type="InterPro" id="IPR010722">
    <property type="entry name" value="BATS_dom"/>
</dbReference>
<dbReference type="InterPro" id="IPR002684">
    <property type="entry name" value="Biotin_synth/BioAB"/>
</dbReference>
<dbReference type="InterPro" id="IPR024177">
    <property type="entry name" value="Biotin_synthase"/>
</dbReference>
<dbReference type="InterPro" id="IPR006638">
    <property type="entry name" value="Elp3/MiaA/NifB-like_rSAM"/>
</dbReference>
<dbReference type="InterPro" id="IPR007197">
    <property type="entry name" value="rSAM"/>
</dbReference>
<dbReference type="NCBIfam" id="TIGR00433">
    <property type="entry name" value="bioB"/>
    <property type="match status" value="1"/>
</dbReference>
<dbReference type="PANTHER" id="PTHR22976">
    <property type="entry name" value="BIOTIN SYNTHASE"/>
    <property type="match status" value="1"/>
</dbReference>
<dbReference type="PANTHER" id="PTHR22976:SF2">
    <property type="entry name" value="BIOTIN SYNTHASE, MITOCHONDRIAL"/>
    <property type="match status" value="1"/>
</dbReference>
<dbReference type="Pfam" id="PF06968">
    <property type="entry name" value="BATS"/>
    <property type="match status" value="1"/>
</dbReference>
<dbReference type="Pfam" id="PF04055">
    <property type="entry name" value="Radical_SAM"/>
    <property type="match status" value="1"/>
</dbReference>
<dbReference type="PIRSF" id="PIRSF001619">
    <property type="entry name" value="Biotin_synth"/>
    <property type="match status" value="1"/>
</dbReference>
<dbReference type="SFLD" id="SFLDF00272">
    <property type="entry name" value="biotin_synthase"/>
    <property type="match status" value="1"/>
</dbReference>
<dbReference type="SFLD" id="SFLDG01278">
    <property type="entry name" value="biotin_synthase_like"/>
    <property type="match status" value="1"/>
</dbReference>
<dbReference type="SMART" id="SM00876">
    <property type="entry name" value="BATS"/>
    <property type="match status" value="1"/>
</dbReference>
<dbReference type="SMART" id="SM00729">
    <property type="entry name" value="Elp3"/>
    <property type="match status" value="1"/>
</dbReference>
<dbReference type="SUPFAM" id="SSF102114">
    <property type="entry name" value="Radical SAM enzymes"/>
    <property type="match status" value="1"/>
</dbReference>
<dbReference type="PROSITE" id="PS51918">
    <property type="entry name" value="RADICAL_SAM"/>
    <property type="match status" value="1"/>
</dbReference>
<sequence>MNQAAQTVATISAEALRQTARNTHALPEDARWRVDDVAALFALPFNDLLFRAQQVHRENFDANTVQLSTLLSIKTGGCEEDCGYCPQSAHHDAGVKAEKLMELDEVLEAARAAKANGATRFCMGAAWRSPKDRHLEPVMDMVREVKAMGLETCVTLGMLKAEQAQQLKDAGLDYYNHNLDTSPEFYGKIITTRTYQDRLDTIGHVRDAGINVCCGGIVGMGESREARAGLIAQLANMDPYPESVPINNLVQVEGTPLAGTEALDPFEFVRTIAVARITMPGAMVRLSAGREAMDEALQALCFMAGANSIFYGEKLLTTGNPQADRDRALLARLDIRAEGYAG</sequence>
<accession>Q477A1</accession>
<comment type="function">
    <text evidence="1">Catalyzes the conversion of dethiobiotin (DTB) to biotin by the insertion of a sulfur atom into dethiobiotin via a radical-based mechanism.</text>
</comment>
<comment type="catalytic activity">
    <reaction evidence="1">
        <text>(4R,5S)-dethiobiotin + (sulfur carrier)-SH + 2 reduced [2Fe-2S]-[ferredoxin] + 2 S-adenosyl-L-methionine = (sulfur carrier)-H + biotin + 2 5'-deoxyadenosine + 2 L-methionine + 2 oxidized [2Fe-2S]-[ferredoxin]</text>
        <dbReference type="Rhea" id="RHEA:22060"/>
        <dbReference type="Rhea" id="RHEA-COMP:10000"/>
        <dbReference type="Rhea" id="RHEA-COMP:10001"/>
        <dbReference type="Rhea" id="RHEA-COMP:14737"/>
        <dbReference type="Rhea" id="RHEA-COMP:14739"/>
        <dbReference type="ChEBI" id="CHEBI:17319"/>
        <dbReference type="ChEBI" id="CHEBI:29917"/>
        <dbReference type="ChEBI" id="CHEBI:33737"/>
        <dbReference type="ChEBI" id="CHEBI:33738"/>
        <dbReference type="ChEBI" id="CHEBI:57586"/>
        <dbReference type="ChEBI" id="CHEBI:57844"/>
        <dbReference type="ChEBI" id="CHEBI:59789"/>
        <dbReference type="ChEBI" id="CHEBI:64428"/>
        <dbReference type="ChEBI" id="CHEBI:149473"/>
        <dbReference type="EC" id="2.8.1.6"/>
    </reaction>
</comment>
<comment type="cofactor">
    <cofactor evidence="1">
        <name>[4Fe-4S] cluster</name>
        <dbReference type="ChEBI" id="CHEBI:49883"/>
    </cofactor>
    <text evidence="1">Binds 1 [4Fe-4S] cluster. The cluster is coordinated with 3 cysteines and an exchangeable S-adenosyl-L-methionine.</text>
</comment>
<comment type="cofactor">
    <cofactor evidence="1">
        <name>[2Fe-2S] cluster</name>
        <dbReference type="ChEBI" id="CHEBI:190135"/>
    </cofactor>
    <text evidence="1">Binds 1 [2Fe-2S] cluster. The cluster is coordinated with 3 cysteines and 1 arginine.</text>
</comment>
<comment type="pathway">
    <text evidence="1">Cofactor biosynthesis; biotin biosynthesis; biotin from 7,8-diaminononanoate: step 2/2.</text>
</comment>
<comment type="subunit">
    <text evidence="1">Homodimer.</text>
</comment>
<comment type="similarity">
    <text evidence="1">Belongs to the radical SAM superfamily. Biotin synthase family.</text>
</comment>
<evidence type="ECO:0000255" key="1">
    <source>
        <dbReference type="HAMAP-Rule" id="MF_01694"/>
    </source>
</evidence>
<evidence type="ECO:0000255" key="2">
    <source>
        <dbReference type="PROSITE-ProRule" id="PRU01266"/>
    </source>
</evidence>